<sequence>MITLIFISIGMTLTSFVVSKNNLWPVTILQSAFLSIAAIALINNHWISKWHNFINSVDSMQLPLLVLSCWLTPLALIASKGHLNNLPITNQRTFIVLVIIITTSLIITFSSLELILFYIAFETTLVPTLILITRWGALMERFQAGLYFIFYTLFGSLPLLISLIALYFSSNSLSIPNVELVWLTTNSSTSLTVWWLLSILAFLVKMPIYGFHLWLPKAHVEAPVAGSMILAAILLKLGGYGLMRLISLFSTTSLNFSSLPLVVFCCWGALVTSIICIRQTDLKALIAYSSVGHMSIVAAGVFSQTIWGINGALMLMIAHGLVSSALFALANTMYERSGTRTLVITRGMKLILPLSTFWWLIMCAANLGFPYSNLIGEILYISWYGWSIWCSYFSNYNCVWGVYSLMIFQVSQQGPSSHFLLNVPTSFSREHLLFLLHLLPLLLIIPTPNLVLISWLK</sequence>
<gene>
    <name type="primary">ND4</name>
</gene>
<reference key="1">
    <citation type="journal article" date="1991" name="Mol. Biol. Evol.">
        <title>Mitochondrial DNA in the sea urchin Arbacia lixula: evolutionary inferences from nucleotide sequence analysis.</title>
        <authorList>
            <person name="de Giorgi C."/>
            <person name="Lanave C."/>
            <person name="Musci M.D."/>
            <person name="Saccone C."/>
        </authorList>
    </citation>
    <scope>NUCLEOTIDE SEQUENCE [GENOMIC DNA]</scope>
</reference>
<proteinExistence type="inferred from homology"/>
<accession>P34941</accession>
<evidence type="ECO:0000250" key="1"/>
<evidence type="ECO:0000255" key="2"/>
<evidence type="ECO:0000305" key="3"/>
<keyword id="KW-0249">Electron transport</keyword>
<keyword id="KW-0472">Membrane</keyword>
<keyword id="KW-0496">Mitochondrion</keyword>
<keyword id="KW-0520">NAD</keyword>
<keyword id="KW-0679">Respiratory chain</keyword>
<keyword id="KW-1278">Translocase</keyword>
<keyword id="KW-0812">Transmembrane</keyword>
<keyword id="KW-1133">Transmembrane helix</keyword>
<keyword id="KW-0813">Transport</keyword>
<keyword id="KW-0830">Ubiquinone</keyword>
<feature type="chain" id="PRO_0000117890" description="NADH-ubiquinone oxidoreductase chain 4">
    <location>
        <begin position="1"/>
        <end position="457"/>
    </location>
</feature>
<feature type="transmembrane region" description="Helical" evidence="2">
    <location>
        <begin position="22"/>
        <end position="42"/>
    </location>
</feature>
<feature type="transmembrane region" description="Helical" evidence="2">
    <location>
        <begin position="59"/>
        <end position="79"/>
    </location>
</feature>
<feature type="transmembrane region" description="Helical" evidence="2">
    <location>
        <begin position="95"/>
        <end position="115"/>
    </location>
</feature>
<feature type="transmembrane region" description="Helical" evidence="2">
    <location>
        <begin position="116"/>
        <end position="136"/>
    </location>
</feature>
<feature type="transmembrane region" description="Helical" evidence="2">
    <location>
        <begin position="148"/>
        <end position="168"/>
    </location>
</feature>
<feature type="transmembrane region" description="Helical" evidence="2">
    <location>
        <begin position="191"/>
        <end position="211"/>
    </location>
</feature>
<feature type="transmembrane region" description="Helical" evidence="2">
    <location>
        <begin position="223"/>
        <end position="243"/>
    </location>
</feature>
<feature type="transmembrane region" description="Helical" evidence="2">
    <location>
        <begin position="257"/>
        <end position="277"/>
    </location>
</feature>
<feature type="transmembrane region" description="Helical" evidence="2">
    <location>
        <begin position="282"/>
        <end position="302"/>
    </location>
</feature>
<feature type="transmembrane region" description="Helical" evidence="2">
    <location>
        <begin position="309"/>
        <end position="329"/>
    </location>
</feature>
<feature type="transmembrane region" description="Helical" evidence="2">
    <location>
        <begin position="350"/>
        <end position="370"/>
    </location>
</feature>
<feature type="transmembrane region" description="Helical" evidence="2">
    <location>
        <begin position="433"/>
        <end position="453"/>
    </location>
</feature>
<protein>
    <recommendedName>
        <fullName>NADH-ubiquinone oxidoreductase chain 4</fullName>
        <ecNumber>7.1.1.2</ecNumber>
    </recommendedName>
    <alternativeName>
        <fullName>NADH dehydrogenase subunit 4</fullName>
    </alternativeName>
</protein>
<organism>
    <name type="scientific">Arbacia lixula</name>
    <name type="common">Black urchin</name>
    <name type="synonym">Echinus lixula</name>
    <dbReference type="NCBI Taxonomy" id="7640"/>
    <lineage>
        <taxon>Eukaryota</taxon>
        <taxon>Metazoa</taxon>
        <taxon>Echinodermata</taxon>
        <taxon>Eleutherozoa</taxon>
        <taxon>Echinozoa</taxon>
        <taxon>Echinoidea</taxon>
        <taxon>Euechinoidea</taxon>
        <taxon>Echinacea</taxon>
        <taxon>Arbacioida</taxon>
        <taxon>Arbaciidae</taxon>
        <taxon>Arbacia</taxon>
    </lineage>
</organism>
<geneLocation type="mitochondrion"/>
<name>NU4M_ARBLI</name>
<dbReference type="EC" id="7.1.1.2"/>
<dbReference type="EMBL" id="M74839">
    <property type="protein sequence ID" value="AAA98046.1"/>
    <property type="molecule type" value="Genomic_DNA"/>
</dbReference>
<dbReference type="EMBL" id="X53727">
    <property type="status" value="NOT_ANNOTATED_CDS"/>
    <property type="molecule type" value="Genomic_DNA"/>
</dbReference>
<dbReference type="SMR" id="P34941"/>
<dbReference type="GO" id="GO:0031966">
    <property type="term" value="C:mitochondrial membrane"/>
    <property type="evidence" value="ECO:0007669"/>
    <property type="project" value="UniProtKB-SubCell"/>
</dbReference>
<dbReference type="GO" id="GO:0008137">
    <property type="term" value="F:NADH dehydrogenase (ubiquinone) activity"/>
    <property type="evidence" value="ECO:0007669"/>
    <property type="project" value="UniProtKB-EC"/>
</dbReference>
<dbReference type="GO" id="GO:0048039">
    <property type="term" value="F:ubiquinone binding"/>
    <property type="evidence" value="ECO:0007669"/>
    <property type="project" value="TreeGrafter"/>
</dbReference>
<dbReference type="GO" id="GO:0042773">
    <property type="term" value="P:ATP synthesis coupled electron transport"/>
    <property type="evidence" value="ECO:0007669"/>
    <property type="project" value="InterPro"/>
</dbReference>
<dbReference type="GO" id="GO:0015990">
    <property type="term" value="P:electron transport coupled proton transport"/>
    <property type="evidence" value="ECO:0007669"/>
    <property type="project" value="TreeGrafter"/>
</dbReference>
<dbReference type="InterPro" id="IPR000260">
    <property type="entry name" value="NADH4_N"/>
</dbReference>
<dbReference type="InterPro" id="IPR003918">
    <property type="entry name" value="NADH_UbQ_OxRdtase"/>
</dbReference>
<dbReference type="InterPro" id="IPR001750">
    <property type="entry name" value="ND/Mrp_TM"/>
</dbReference>
<dbReference type="PANTHER" id="PTHR43507">
    <property type="entry name" value="NADH-UBIQUINONE OXIDOREDUCTASE CHAIN 4"/>
    <property type="match status" value="1"/>
</dbReference>
<dbReference type="PANTHER" id="PTHR43507:SF20">
    <property type="entry name" value="NADH-UBIQUINONE OXIDOREDUCTASE CHAIN 4"/>
    <property type="match status" value="1"/>
</dbReference>
<dbReference type="Pfam" id="PF01059">
    <property type="entry name" value="Oxidored_q5_N"/>
    <property type="match status" value="1"/>
</dbReference>
<dbReference type="Pfam" id="PF00361">
    <property type="entry name" value="Proton_antipo_M"/>
    <property type="match status" value="1"/>
</dbReference>
<dbReference type="PRINTS" id="PR01437">
    <property type="entry name" value="NUOXDRDTASE4"/>
</dbReference>
<comment type="function">
    <text evidence="1">Core subunit of the mitochondrial membrane respiratory chain NADH dehydrogenase (Complex I) that is believed to belong to the minimal assembly required for catalysis. Complex I functions in the transfer of electrons from NADH to the respiratory chain. The immediate electron acceptor for the enzyme is believed to be ubiquinone (By similarity).</text>
</comment>
<comment type="catalytic activity">
    <reaction>
        <text>a ubiquinone + NADH + 5 H(+)(in) = a ubiquinol + NAD(+) + 4 H(+)(out)</text>
        <dbReference type="Rhea" id="RHEA:29091"/>
        <dbReference type="Rhea" id="RHEA-COMP:9565"/>
        <dbReference type="Rhea" id="RHEA-COMP:9566"/>
        <dbReference type="ChEBI" id="CHEBI:15378"/>
        <dbReference type="ChEBI" id="CHEBI:16389"/>
        <dbReference type="ChEBI" id="CHEBI:17976"/>
        <dbReference type="ChEBI" id="CHEBI:57540"/>
        <dbReference type="ChEBI" id="CHEBI:57945"/>
        <dbReference type="EC" id="7.1.1.2"/>
    </reaction>
</comment>
<comment type="subcellular location">
    <subcellularLocation>
        <location evidence="1">Mitochondrion membrane</location>
        <topology evidence="1">Multi-pass membrane protein</topology>
    </subcellularLocation>
</comment>
<comment type="similarity">
    <text evidence="3">Belongs to the complex I subunit 4 family.</text>
</comment>